<name>HS702_ARATH</name>
<comment type="function">
    <text evidence="12">In cooperation with other chaperones, Hsp70s are key components that facilitate folding of de novo synthesized proteins, assist translocation of precursor proteins into organelles, and are responsible for degradation of damaged protein under stress conditions.</text>
</comment>
<comment type="subcellular location">
    <subcellularLocation>
        <location evidence="5">Cytoplasm</location>
    </subcellularLocation>
    <subcellularLocation>
        <location evidence="7">Cytoplasm</location>
        <location evidence="7">Cytosol</location>
    </subcellularLocation>
    <subcellularLocation>
        <location evidence="7">Nucleus</location>
    </subcellularLocation>
</comment>
<comment type="tissue specificity">
    <text evidence="7">Expressed in cotyledons, leaves, stems, vascular bundles, roots, stigmas and anthers.</text>
</comment>
<comment type="developmental stage">
    <text evidence="2">Down-regulated during seed maturation.</text>
</comment>
<comment type="induction">
    <text evidence="2 3 4 7">Induced by heat shock and cold (PubMed:11402207). Up-regulated by viral infection (PubMed:15805473). Induced by infection with the bacterial pathogen Pseudomonas syringae (PubMed:18065690). Induced by cytokinin (PubMed:28004282).</text>
</comment>
<comment type="disruption phenotype">
    <text evidence="5 6 7">No visible phenotype, under normal growth conditions.</text>
</comment>
<comment type="similarity">
    <text evidence="11">Belongs to the heat shock protein 70 (TC 1.A.33) family. DnaK subfamily.</text>
</comment>
<reference key="1">
    <citation type="journal article" date="2000" name="Nature">
        <title>Sequence and analysis of chromosome 5 of the plant Arabidopsis thaliana.</title>
        <authorList>
            <person name="Tabata S."/>
            <person name="Kaneko T."/>
            <person name="Nakamura Y."/>
            <person name="Kotani H."/>
            <person name="Kato T."/>
            <person name="Asamizu E."/>
            <person name="Miyajima N."/>
            <person name="Sasamoto S."/>
            <person name="Kimura T."/>
            <person name="Hosouchi T."/>
            <person name="Kawashima K."/>
            <person name="Kohara M."/>
            <person name="Matsumoto M."/>
            <person name="Matsuno A."/>
            <person name="Muraki A."/>
            <person name="Nakayama S."/>
            <person name="Nakazaki N."/>
            <person name="Naruo K."/>
            <person name="Okumura S."/>
            <person name="Shinpo S."/>
            <person name="Takeuchi C."/>
            <person name="Wada T."/>
            <person name="Watanabe A."/>
            <person name="Yamada M."/>
            <person name="Yasuda M."/>
            <person name="Sato S."/>
            <person name="de la Bastide M."/>
            <person name="Huang E."/>
            <person name="Spiegel L."/>
            <person name="Gnoj L."/>
            <person name="O'Shaughnessy A."/>
            <person name="Preston R."/>
            <person name="Habermann K."/>
            <person name="Murray J."/>
            <person name="Johnson D."/>
            <person name="Rohlfing T."/>
            <person name="Nelson J."/>
            <person name="Stoneking T."/>
            <person name="Pepin K."/>
            <person name="Spieth J."/>
            <person name="Sekhon M."/>
            <person name="Armstrong J."/>
            <person name="Becker M."/>
            <person name="Belter E."/>
            <person name="Cordum H."/>
            <person name="Cordes M."/>
            <person name="Courtney L."/>
            <person name="Courtney W."/>
            <person name="Dante M."/>
            <person name="Du H."/>
            <person name="Edwards J."/>
            <person name="Fryman J."/>
            <person name="Haakensen B."/>
            <person name="Lamar E."/>
            <person name="Latreille P."/>
            <person name="Leonard S."/>
            <person name="Meyer R."/>
            <person name="Mulvaney E."/>
            <person name="Ozersky P."/>
            <person name="Riley A."/>
            <person name="Strowmatt C."/>
            <person name="Wagner-McPherson C."/>
            <person name="Wollam A."/>
            <person name="Yoakum M."/>
            <person name="Bell M."/>
            <person name="Dedhia N."/>
            <person name="Parnell L."/>
            <person name="Shah R."/>
            <person name="Rodriguez M."/>
            <person name="Hoon See L."/>
            <person name="Vil D."/>
            <person name="Baker J."/>
            <person name="Kirchoff K."/>
            <person name="Toth K."/>
            <person name="King L."/>
            <person name="Bahret A."/>
            <person name="Miller B."/>
            <person name="Marra M.A."/>
            <person name="Martienssen R."/>
            <person name="McCombie W.R."/>
            <person name="Wilson R.K."/>
            <person name="Murphy G."/>
            <person name="Bancroft I."/>
            <person name="Volckaert G."/>
            <person name="Wambutt R."/>
            <person name="Duesterhoeft A."/>
            <person name="Stiekema W."/>
            <person name="Pohl T."/>
            <person name="Entian K.-D."/>
            <person name="Terryn N."/>
            <person name="Hartley N."/>
            <person name="Bent E."/>
            <person name="Johnson S."/>
            <person name="Langham S.-A."/>
            <person name="McCullagh B."/>
            <person name="Robben J."/>
            <person name="Grymonprez B."/>
            <person name="Zimmermann W."/>
            <person name="Ramsperger U."/>
            <person name="Wedler H."/>
            <person name="Balke K."/>
            <person name="Wedler E."/>
            <person name="Peters S."/>
            <person name="van Staveren M."/>
            <person name="Dirkse W."/>
            <person name="Mooijman P."/>
            <person name="Klein Lankhorst R."/>
            <person name="Weitzenegger T."/>
            <person name="Bothe G."/>
            <person name="Rose M."/>
            <person name="Hauf J."/>
            <person name="Berneiser S."/>
            <person name="Hempel S."/>
            <person name="Feldpausch M."/>
            <person name="Lamberth S."/>
            <person name="Villarroel R."/>
            <person name="Gielen J."/>
            <person name="Ardiles W."/>
            <person name="Bents O."/>
            <person name="Lemcke K."/>
            <person name="Kolesov G."/>
            <person name="Mayer K.F.X."/>
            <person name="Rudd S."/>
            <person name="Schoof H."/>
            <person name="Schueller C."/>
            <person name="Zaccaria P."/>
            <person name="Mewes H.-W."/>
            <person name="Bevan M."/>
            <person name="Fransz P.F."/>
        </authorList>
    </citation>
    <scope>NUCLEOTIDE SEQUENCE [LARGE SCALE GENOMIC DNA]</scope>
    <source>
        <strain>cv. Columbia</strain>
    </source>
</reference>
<reference key="2">
    <citation type="journal article" date="2017" name="Plant J.">
        <title>Araport11: a complete reannotation of the Arabidopsis thaliana reference genome.</title>
        <authorList>
            <person name="Cheng C.Y."/>
            <person name="Krishnakumar V."/>
            <person name="Chan A.P."/>
            <person name="Thibaud-Nissen F."/>
            <person name="Schobel S."/>
            <person name="Town C.D."/>
        </authorList>
    </citation>
    <scope>GENOME REANNOTATION</scope>
    <source>
        <strain>cv. Columbia</strain>
    </source>
</reference>
<reference key="3">
    <citation type="journal article" date="2003" name="Science">
        <title>Empirical analysis of transcriptional activity in the Arabidopsis genome.</title>
        <authorList>
            <person name="Yamada K."/>
            <person name="Lim J."/>
            <person name="Dale J.M."/>
            <person name="Chen H."/>
            <person name="Shinn P."/>
            <person name="Palm C.J."/>
            <person name="Southwick A.M."/>
            <person name="Wu H.C."/>
            <person name="Kim C.J."/>
            <person name="Nguyen M."/>
            <person name="Pham P.K."/>
            <person name="Cheuk R.F."/>
            <person name="Karlin-Newmann G."/>
            <person name="Liu S.X."/>
            <person name="Lam B."/>
            <person name="Sakano H."/>
            <person name="Wu T."/>
            <person name="Yu G."/>
            <person name="Miranda M."/>
            <person name="Quach H.L."/>
            <person name="Tripp M."/>
            <person name="Chang C.H."/>
            <person name="Lee J.M."/>
            <person name="Toriumi M.J."/>
            <person name="Chan M.M."/>
            <person name="Tang C.C."/>
            <person name="Onodera C.S."/>
            <person name="Deng J.M."/>
            <person name="Akiyama K."/>
            <person name="Ansari Y."/>
            <person name="Arakawa T."/>
            <person name="Banh J."/>
            <person name="Banno F."/>
            <person name="Bowser L."/>
            <person name="Brooks S.Y."/>
            <person name="Carninci P."/>
            <person name="Chao Q."/>
            <person name="Choy N."/>
            <person name="Enju A."/>
            <person name="Goldsmith A.D."/>
            <person name="Gurjal M."/>
            <person name="Hansen N.F."/>
            <person name="Hayashizaki Y."/>
            <person name="Johnson-Hopson C."/>
            <person name="Hsuan V.W."/>
            <person name="Iida K."/>
            <person name="Karnes M."/>
            <person name="Khan S."/>
            <person name="Koesema E."/>
            <person name="Ishida J."/>
            <person name="Jiang P.X."/>
            <person name="Jones T."/>
            <person name="Kawai J."/>
            <person name="Kamiya A."/>
            <person name="Meyers C."/>
            <person name="Nakajima M."/>
            <person name="Narusaka M."/>
            <person name="Seki M."/>
            <person name="Sakurai T."/>
            <person name="Satou M."/>
            <person name="Tamse R."/>
            <person name="Vaysberg M."/>
            <person name="Wallender E.K."/>
            <person name="Wong C."/>
            <person name="Yamamura Y."/>
            <person name="Yuan S."/>
            <person name="Shinozaki K."/>
            <person name="Davis R.W."/>
            <person name="Theologis A."/>
            <person name="Ecker J.R."/>
        </authorList>
    </citation>
    <scope>NUCLEOTIDE SEQUENCE [LARGE SCALE MRNA]</scope>
    <source>
        <strain>cv. Columbia</strain>
    </source>
</reference>
<reference key="4">
    <citation type="submission" date="2006-07" db="EMBL/GenBank/DDBJ databases">
        <title>Large-scale analysis of RIKEN Arabidopsis full-length (RAFL) cDNAs.</title>
        <authorList>
            <person name="Totoki Y."/>
            <person name="Seki M."/>
            <person name="Ishida J."/>
            <person name="Nakajima M."/>
            <person name="Enju A."/>
            <person name="Kamiya A."/>
            <person name="Narusaka M."/>
            <person name="Shin-i T."/>
            <person name="Nakagawa M."/>
            <person name="Sakamoto N."/>
            <person name="Oishi K."/>
            <person name="Kohara Y."/>
            <person name="Kobayashi M."/>
            <person name="Toyoda A."/>
            <person name="Sakaki Y."/>
            <person name="Sakurai T."/>
            <person name="Iida K."/>
            <person name="Akiyama K."/>
            <person name="Satou M."/>
            <person name="Toyoda T."/>
            <person name="Konagaya A."/>
            <person name="Carninci P."/>
            <person name="Kawai J."/>
            <person name="Hayashizaki Y."/>
            <person name="Shinozaki K."/>
        </authorList>
    </citation>
    <scope>NUCLEOTIDE SEQUENCE [LARGE SCALE MRNA]</scope>
    <source>
        <strain>cv. Columbia</strain>
    </source>
</reference>
<reference key="5">
    <citation type="journal article" date="1988" name="Plant Physiol.">
        <title>Characterization of an hsp70 cognate gene family in Arabidopsis.</title>
        <authorList>
            <person name="Wu C.H."/>
            <person name="Caspar T."/>
            <person name="Browse J."/>
            <person name="Lindquist S."/>
            <person name="Somerville C.R."/>
        </authorList>
    </citation>
    <scope>NUCLEOTIDE SEQUENCE [GENOMIC DNA] OF 1-102</scope>
</reference>
<reference key="6">
    <citation type="submission" date="1994-01" db="EMBL/GenBank/DDBJ databases">
        <authorList>
            <person name="King K."/>
        </authorList>
    </citation>
    <scope>NUCLEOTIDE SEQUENCE [GENOMIC DNA] OF 1-98</scope>
    <source>
        <strain>cv. Ostwestfalen</strain>
        <tissue>Leaf</tissue>
    </source>
</reference>
<reference key="7">
    <citation type="submission" date="1996-10" db="EMBL/GenBank/DDBJ databases">
        <title>Specific Hsp70s are expressed and accumulated during silique development in Arabidopsis.</title>
        <authorList>
            <person name="Wang Y.C."/>
            <person name="Lee S.P."/>
            <person name="Shieh K."/>
            <person name="Hu S.M."/>
            <person name="Wang C."/>
            <person name="Lin B.L."/>
        </authorList>
    </citation>
    <scope>NUCLEOTIDE SEQUENCE [MRNA] OF 550-653</scope>
    <source>
        <strain>cv. Columbia</strain>
        <tissue>Silique</tissue>
    </source>
</reference>
<reference key="8">
    <citation type="journal article" date="2001" name="Cell Stress Chaperones">
        <title>Genomic analysis of the Hsp70 superfamily in Arabidopsis thaliana.</title>
        <authorList>
            <person name="Lin B.L."/>
            <person name="Wang J.S."/>
            <person name="Liu H.C."/>
            <person name="Chen R.W."/>
            <person name="Meyer Y."/>
            <person name="Barakat A."/>
            <person name="Delseny M."/>
        </authorList>
    </citation>
    <scope>GENE FAMILY</scope>
    <scope>NOMENCLATURE</scope>
</reference>
<reference key="9">
    <citation type="journal article" date="2001" name="Plant Physiol.">
        <title>Comprehensive expression profile analysis of the Arabidopsis Hsp70 gene family.</title>
        <authorList>
            <person name="Sung D.Y."/>
            <person name="Vierling E."/>
            <person name="Guy C.L."/>
        </authorList>
    </citation>
    <scope>DNAK GENE SUBFAMILY</scope>
    <scope>INDUCTION</scope>
    <scope>DEVELOPMENTAL STAGE</scope>
</reference>
<reference key="10">
    <citation type="journal article" date="2005" name="Plant Physiol.">
        <title>Virus induction of heat shock protein 70 reflects a general response to protein accumulation in the plant cytosol.</title>
        <authorList>
            <person name="Aparicio F."/>
            <person name="Thomas C.L."/>
            <person name="Lederer C."/>
            <person name="Niu Y."/>
            <person name="Wang D."/>
            <person name="Maule A.J."/>
        </authorList>
    </citation>
    <scope>INDUCTION</scope>
</reference>
<reference key="11">
    <citation type="journal article" date="2007" name="Plant Cell">
        <title>Interaction between SGT1 and cytosolic/nuclear HSC70 chaperones regulates Arabidopsis immune responses.</title>
        <authorList>
            <person name="Noel L.D."/>
            <person name="Cagna G."/>
            <person name="Stuttmann J."/>
            <person name="Wirthmueller L."/>
            <person name="Betsuyaku S."/>
            <person name="Witte C.P."/>
            <person name="Bhat R."/>
            <person name="Pochon N."/>
            <person name="Colby T."/>
            <person name="Parker J.E."/>
        </authorList>
    </citation>
    <scope>INDUCTION BY PATHOGEN</scope>
</reference>
<reference key="12">
    <citation type="journal article" date="2011" name="Plant J.">
        <title>AtHsp70-15-deficient Arabidopsis plants are characterized by reduced growth, a constitutive cytosolic protein response and enhanced resistance to TuMV.</title>
        <authorList>
            <person name="Jungkunz I."/>
            <person name="Link K."/>
            <person name="Vogel F."/>
            <person name="Voll L.M."/>
            <person name="Sonnewald S."/>
            <person name="Sonnewald U."/>
        </authorList>
    </citation>
    <scope>SUBCELLULAR LOCATION</scope>
    <scope>DISRUPTION PHENOTYPE</scope>
</reference>
<reference key="13">
    <citation type="journal article" date="2011" name="Plant Physiol.">
        <title>The Mediator complex in plants: structure, phylogeny, and expression profiling of representative genes in a dicot (Arabidopsis) and a monocot (rice) during reproduction and abiotic stress.</title>
        <authorList>
            <person name="Mathur S."/>
            <person name="Vyas S."/>
            <person name="Kapoor S."/>
            <person name="Tyagi A.K."/>
        </authorList>
    </citation>
    <scope>NOMENCLATURE</scope>
</reference>
<reference key="14">
    <citation type="journal article" date="2015" name="Plant Physiol.">
        <title>Opposing effects on two phases of defense responses from concerted actions of HEAT SHOCK COGNATE70 and BONZAI1 in Arabidopsis.</title>
        <authorList>
            <person name="Gou M."/>
            <person name="Zhang Z."/>
            <person name="Zhang N."/>
            <person name="Huang Q."/>
            <person name="Monaghan J."/>
            <person name="Yang H."/>
            <person name="Shi Z."/>
            <person name="Zipfel C."/>
            <person name="Hua J."/>
        </authorList>
    </citation>
    <scope>INTERACTION WITH BON1</scope>
    <scope>DISRUPTION PHENOTYPE</scope>
</reference>
<reference key="15">
    <citation type="journal article" date="2017" name="J. Plant Res.">
        <title>A subclass of HSP70s regulate development and abiotic stress responses in Arabidopsis thaliana.</title>
        <authorList>
            <person name="Leng L."/>
            <person name="Liang Q."/>
            <person name="Jiang J."/>
            <person name="Zhang C."/>
            <person name="Hao Y."/>
            <person name="Wang X."/>
            <person name="Su W."/>
        </authorList>
    </citation>
    <scope>SUBCELLULAR LOCATION</scope>
    <scope>TISSUE SPECIFICITY</scope>
    <scope>INDUCTION BY CYTOKININ</scope>
    <scope>DISRUPTION PHENOTYPE</scope>
</reference>
<feature type="chain" id="PRO_0000078345" description="Heat shock 70 kDa protein 2">
    <location>
        <begin position="1"/>
        <end position="653"/>
    </location>
</feature>
<feature type="region of interest" description="Disordered" evidence="1">
    <location>
        <begin position="617"/>
        <end position="653"/>
    </location>
</feature>
<feature type="compositionally biased region" description="Gly residues" evidence="1">
    <location>
        <begin position="619"/>
        <end position="630"/>
    </location>
</feature>
<feature type="sequence conflict" description="In Ref. 6; CAA54420." evidence="11" ref="6">
    <original>E</original>
    <variation>K</variation>
    <location>
        <position position="6"/>
    </location>
</feature>
<feature type="sequence conflict" description="In Ref. 5; AAA32820." evidence="11" ref="5">
    <original>GTA</original>
    <variation>ELQ</variation>
    <location>
        <begin position="100"/>
        <end position="102"/>
    </location>
</feature>
<feature type="sequence conflict" description="In Ref. 4; BAD94888." evidence="11" ref="4">
    <original>A</original>
    <variation>G</variation>
    <location>
        <position position="614"/>
    </location>
</feature>
<protein>
    <recommendedName>
        <fullName evidence="9">Heat shock 70 kDa protein 2</fullName>
    </recommendedName>
    <alternativeName>
        <fullName evidence="8">Heat shock cognate 70 kDa protein 2</fullName>
    </alternativeName>
    <alternativeName>
        <fullName evidence="8">Heat shock cognate protein 70-2</fullName>
        <shortName evidence="8">AtHsc70-2</shortName>
    </alternativeName>
    <alternativeName>
        <fullName evidence="9">Heat shock protein 70-2</fullName>
        <shortName evidence="9">AtHsp70-2</shortName>
    </alternativeName>
</protein>
<dbReference type="EMBL" id="AL162971">
    <property type="protein sequence ID" value="CAB85986.1"/>
    <property type="molecule type" value="Genomic_DNA"/>
</dbReference>
<dbReference type="EMBL" id="CP002688">
    <property type="protein sequence ID" value="AED90479.1"/>
    <property type="molecule type" value="Genomic_DNA"/>
</dbReference>
<dbReference type="EMBL" id="AY093152">
    <property type="protein sequence ID" value="AAM13151.1"/>
    <property type="molecule type" value="mRNA"/>
</dbReference>
<dbReference type="EMBL" id="BT008411">
    <property type="protein sequence ID" value="AAP37770.1"/>
    <property type="molecule type" value="mRNA"/>
</dbReference>
<dbReference type="EMBL" id="AK222068">
    <property type="protein sequence ID" value="BAD94888.1"/>
    <property type="molecule type" value="mRNA"/>
</dbReference>
<dbReference type="EMBL" id="AK227090">
    <property type="protein sequence ID" value="BAE99142.1"/>
    <property type="molecule type" value="mRNA"/>
</dbReference>
<dbReference type="EMBL" id="AH001335">
    <property type="protein sequence ID" value="AAA32820.1"/>
    <property type="molecule type" value="Genomic_DNA"/>
</dbReference>
<dbReference type="EMBL" id="X77199">
    <property type="protein sequence ID" value="CAA54420.1"/>
    <property type="molecule type" value="Genomic_DNA"/>
</dbReference>
<dbReference type="EMBL" id="Y08892">
    <property type="protein sequence ID" value="CAA70105.1"/>
    <property type="molecule type" value="mRNA"/>
</dbReference>
<dbReference type="PIR" id="JA0170">
    <property type="entry name" value="JA0170"/>
</dbReference>
<dbReference type="PIR" id="T48270">
    <property type="entry name" value="T48270"/>
</dbReference>
<dbReference type="RefSeq" id="NP_195869.1">
    <property type="nucleotide sequence ID" value="NM_120327.5"/>
</dbReference>
<dbReference type="SMR" id="P22954"/>
<dbReference type="BioGRID" id="17132">
    <property type="interactions" value="22"/>
</dbReference>
<dbReference type="FunCoup" id="P22954">
    <property type="interactions" value="2008"/>
</dbReference>
<dbReference type="IntAct" id="P22954">
    <property type="interactions" value="3"/>
</dbReference>
<dbReference type="STRING" id="3702.P22954"/>
<dbReference type="iPTMnet" id="P22954"/>
<dbReference type="MetOSite" id="P22954"/>
<dbReference type="PaxDb" id="3702-AT5G02490.1"/>
<dbReference type="ProteomicsDB" id="250836"/>
<dbReference type="EnsemblPlants" id="AT5G02490.1">
    <property type="protein sequence ID" value="AT5G02490.1"/>
    <property type="gene ID" value="AT5G02490"/>
</dbReference>
<dbReference type="GeneID" id="831856"/>
<dbReference type="Gramene" id="AT5G02490.1">
    <property type="protein sequence ID" value="AT5G02490.1"/>
    <property type="gene ID" value="AT5G02490"/>
</dbReference>
<dbReference type="KEGG" id="ath:AT5G02490"/>
<dbReference type="Araport" id="AT5G02490"/>
<dbReference type="TAIR" id="AT5G02490">
    <property type="gene designation" value="HSP70-2"/>
</dbReference>
<dbReference type="eggNOG" id="KOG0101">
    <property type="taxonomic scope" value="Eukaryota"/>
</dbReference>
<dbReference type="HOGENOM" id="CLU_005965_3_0_1"/>
<dbReference type="InParanoid" id="P22954"/>
<dbReference type="OMA" id="CWTSARR"/>
<dbReference type="OrthoDB" id="2401965at2759"/>
<dbReference type="PhylomeDB" id="P22954"/>
<dbReference type="BRENDA" id="3.6.4.10">
    <property type="organism ID" value="399"/>
</dbReference>
<dbReference type="CD-CODE" id="4299E36E">
    <property type="entry name" value="Nucleolus"/>
</dbReference>
<dbReference type="PRO" id="PR:P22954"/>
<dbReference type="Proteomes" id="UP000006548">
    <property type="component" value="Chromosome 5"/>
</dbReference>
<dbReference type="ExpressionAtlas" id="P22954">
    <property type="expression patterns" value="baseline and differential"/>
</dbReference>
<dbReference type="GO" id="GO:0005829">
    <property type="term" value="C:cytosol"/>
    <property type="evidence" value="ECO:0000314"/>
    <property type="project" value="TAIR"/>
</dbReference>
<dbReference type="GO" id="GO:0005794">
    <property type="term" value="C:Golgi apparatus"/>
    <property type="evidence" value="ECO:0007005"/>
    <property type="project" value="TAIR"/>
</dbReference>
<dbReference type="GO" id="GO:0005634">
    <property type="term" value="C:nucleus"/>
    <property type="evidence" value="ECO:0000314"/>
    <property type="project" value="TAIR"/>
</dbReference>
<dbReference type="GO" id="GO:0009505">
    <property type="term" value="C:plant-type cell wall"/>
    <property type="evidence" value="ECO:0007005"/>
    <property type="project" value="TAIR"/>
</dbReference>
<dbReference type="GO" id="GO:0005886">
    <property type="term" value="C:plasma membrane"/>
    <property type="evidence" value="ECO:0007005"/>
    <property type="project" value="TAIR"/>
</dbReference>
<dbReference type="GO" id="GO:0005524">
    <property type="term" value="F:ATP binding"/>
    <property type="evidence" value="ECO:0007669"/>
    <property type="project" value="UniProtKB-KW"/>
</dbReference>
<dbReference type="GO" id="GO:0140662">
    <property type="term" value="F:ATP-dependent protein folding chaperone"/>
    <property type="evidence" value="ECO:0007669"/>
    <property type="project" value="InterPro"/>
</dbReference>
<dbReference type="GO" id="GO:0009617">
    <property type="term" value="P:response to bacterium"/>
    <property type="evidence" value="ECO:0000270"/>
    <property type="project" value="TAIR"/>
</dbReference>
<dbReference type="GO" id="GO:0009408">
    <property type="term" value="P:response to heat"/>
    <property type="evidence" value="ECO:0000270"/>
    <property type="project" value="UniProtKB"/>
</dbReference>
<dbReference type="GO" id="GO:0009615">
    <property type="term" value="P:response to virus"/>
    <property type="evidence" value="ECO:0000270"/>
    <property type="project" value="UniProtKB"/>
</dbReference>
<dbReference type="CDD" id="cd10233">
    <property type="entry name" value="ASKHA_NBD_HSP70_HSPA1"/>
    <property type="match status" value="1"/>
</dbReference>
<dbReference type="FunFam" id="2.60.34.10:FF:000002">
    <property type="entry name" value="Heat shock 70 kDa"/>
    <property type="match status" value="1"/>
</dbReference>
<dbReference type="FunFam" id="3.90.640.10:FF:000002">
    <property type="entry name" value="Heat shock 70 kDa"/>
    <property type="match status" value="1"/>
</dbReference>
<dbReference type="FunFam" id="1.20.1270.10:FF:000028">
    <property type="entry name" value="Heat shock 70 kDa protein"/>
    <property type="match status" value="1"/>
</dbReference>
<dbReference type="FunFam" id="3.30.420.40:FF:000172">
    <property type="entry name" value="Heat shock 70 kDa protein"/>
    <property type="match status" value="1"/>
</dbReference>
<dbReference type="FunFam" id="3.30.30.30:FF:000001">
    <property type="entry name" value="heat shock 70 kDa protein-like"/>
    <property type="match status" value="1"/>
</dbReference>
<dbReference type="FunFam" id="3.30.420.40:FF:000465">
    <property type="entry name" value="Heat shock cognate 70 kDa protein 2"/>
    <property type="match status" value="1"/>
</dbReference>
<dbReference type="FunFam" id="3.30.420.40:FF:000026">
    <property type="entry name" value="Heat shock protein 70"/>
    <property type="match status" value="1"/>
</dbReference>
<dbReference type="Gene3D" id="1.20.1270.10">
    <property type="match status" value="1"/>
</dbReference>
<dbReference type="Gene3D" id="3.30.30.30">
    <property type="match status" value="1"/>
</dbReference>
<dbReference type="Gene3D" id="3.30.420.40">
    <property type="match status" value="2"/>
</dbReference>
<dbReference type="Gene3D" id="3.90.640.10">
    <property type="entry name" value="Actin, Chain A, domain 4"/>
    <property type="match status" value="1"/>
</dbReference>
<dbReference type="Gene3D" id="2.60.34.10">
    <property type="entry name" value="Substrate Binding Domain Of DNAk, Chain A, domain 1"/>
    <property type="match status" value="1"/>
</dbReference>
<dbReference type="InterPro" id="IPR043129">
    <property type="entry name" value="ATPase_NBD"/>
</dbReference>
<dbReference type="InterPro" id="IPR018181">
    <property type="entry name" value="Heat_shock_70_CS"/>
</dbReference>
<dbReference type="InterPro" id="IPR029048">
    <property type="entry name" value="HSP70_C_sf"/>
</dbReference>
<dbReference type="InterPro" id="IPR029047">
    <property type="entry name" value="HSP70_peptide-bd_sf"/>
</dbReference>
<dbReference type="InterPro" id="IPR013126">
    <property type="entry name" value="Hsp_70_fam"/>
</dbReference>
<dbReference type="NCBIfam" id="NF001413">
    <property type="entry name" value="PRK00290.1"/>
    <property type="match status" value="1"/>
</dbReference>
<dbReference type="PANTHER" id="PTHR19375">
    <property type="entry name" value="HEAT SHOCK PROTEIN 70KDA"/>
    <property type="match status" value="1"/>
</dbReference>
<dbReference type="Pfam" id="PF00012">
    <property type="entry name" value="HSP70"/>
    <property type="match status" value="1"/>
</dbReference>
<dbReference type="PRINTS" id="PR00301">
    <property type="entry name" value="HEATSHOCK70"/>
</dbReference>
<dbReference type="SUPFAM" id="SSF53067">
    <property type="entry name" value="Actin-like ATPase domain"/>
    <property type="match status" value="2"/>
</dbReference>
<dbReference type="SUPFAM" id="SSF100934">
    <property type="entry name" value="Heat shock protein 70kD (HSP70), C-terminal subdomain"/>
    <property type="match status" value="1"/>
</dbReference>
<dbReference type="SUPFAM" id="SSF100920">
    <property type="entry name" value="Heat shock protein 70kD (HSP70), peptide-binding domain"/>
    <property type="match status" value="1"/>
</dbReference>
<dbReference type="PROSITE" id="PS00297">
    <property type="entry name" value="HSP70_1"/>
    <property type="match status" value="1"/>
</dbReference>
<dbReference type="PROSITE" id="PS00329">
    <property type="entry name" value="HSP70_2"/>
    <property type="match status" value="1"/>
</dbReference>
<dbReference type="PROSITE" id="PS01036">
    <property type="entry name" value="HSP70_3"/>
    <property type="match status" value="1"/>
</dbReference>
<evidence type="ECO:0000256" key="1">
    <source>
        <dbReference type="SAM" id="MobiDB-lite"/>
    </source>
</evidence>
<evidence type="ECO:0000269" key="2">
    <source>
    </source>
</evidence>
<evidence type="ECO:0000269" key="3">
    <source>
    </source>
</evidence>
<evidence type="ECO:0000269" key="4">
    <source>
    </source>
</evidence>
<evidence type="ECO:0000269" key="5">
    <source>
    </source>
</evidence>
<evidence type="ECO:0000269" key="6">
    <source>
    </source>
</evidence>
<evidence type="ECO:0000269" key="7">
    <source>
    </source>
</evidence>
<evidence type="ECO:0000303" key="8">
    <source>
    </source>
</evidence>
<evidence type="ECO:0000303" key="9">
    <source>
    </source>
</evidence>
<evidence type="ECO:0000303" key="10">
    <source>
    </source>
</evidence>
<evidence type="ECO:0000305" key="11"/>
<evidence type="ECO:0000305" key="12">
    <source>
    </source>
</evidence>
<evidence type="ECO:0000312" key="13">
    <source>
        <dbReference type="Araport" id="AT5G02490"/>
    </source>
</evidence>
<evidence type="ECO:0000312" key="14">
    <source>
        <dbReference type="EMBL" id="CAA70105.1"/>
    </source>
</evidence>
<evidence type="ECO:0000312" key="15">
    <source>
        <dbReference type="EMBL" id="CAB85986.1"/>
    </source>
</evidence>
<keyword id="KW-0067">ATP-binding</keyword>
<keyword id="KW-0143">Chaperone</keyword>
<keyword id="KW-0963">Cytoplasm</keyword>
<keyword id="KW-0547">Nucleotide-binding</keyword>
<keyword id="KW-0539">Nucleus</keyword>
<keyword id="KW-1185">Reference proteome</keyword>
<keyword id="KW-0346">Stress response</keyword>
<keyword id="KW-0804">Transcription</keyword>
<keyword id="KW-0805">Transcription regulation</keyword>
<sequence length="653" mass="71387">MAGKGEGPAIGIDLGTTYSCVGVWQHDRVEIIANDQGNRTTPSYVAFTDSERLIGDAAKNQVAMNPVNTVFDAKRLIGRRFSDASVQSDRQLWPFTIISGTAEKPMIVVEYKGEEKQFAAEEISSMVLIKMREIAEAFLGTTVKNAVVTVPAYFNDSQRQATKDAGVIAGLNVLRIINEPTAAAIAYGLDKKATSVGEKNVLIFDLGGGTFDVSLLTIEEGIFEVKATAGDTHLGGEDFDNRMVNHFVQEFKRKNKQDITGQPRALRRLRTACERAKRTLSSTAQTTIEIDSLYGGADFYSPITRARFEEMNMDLFRKCMEPVEKCLRDAKMDKSTVHEIVLVGGSTRIPKVQQLLQDFFNGKELCKSINPDEAVAYGAAVQAAILSGEGNEKVQDLLLLDVTPLSLGLETAGGVMTTLIQRNTTIPTKKEQVFSTYSDNQPGVLIQVFEGERARTKDNNLLGKFELSGIPPAPRGVPQITVCFDIDANGILNVSAEDKTTGKKNKITITNDKGRLSKEDIEKMVQEAEKYKSEDEEHKKKVEAKNALENYAYNMRNTIRDEKIGEKLPAADKKKVEDSIEEAIQWLDGNQLGEADEFEDKMKELESVCNPIIAKMYQGGAGGEAGGPGASGMDEDEAPPASGGAGPKIEEVD</sequence>
<accession>P22954</accession>
<accession>O04293</accession>
<accession>Q0WUQ6</accession>
<accession>Q56WH2</accession>
<accession>Q9LZ53</accession>
<gene>
    <name evidence="9" type="primary">HSP70-2</name>
    <name evidence="8" type="synonym">HSC70-2</name>
    <name evidence="14" type="synonym">HSC70-G8</name>
    <name evidence="10" type="synonym">MED37_3</name>
    <name type="synonym">MED37D</name>
    <name evidence="13" type="ordered locus">At5g02490</name>
    <name evidence="15" type="ORF">T22P11.80</name>
</gene>
<organism>
    <name type="scientific">Arabidopsis thaliana</name>
    <name type="common">Mouse-ear cress</name>
    <dbReference type="NCBI Taxonomy" id="3702"/>
    <lineage>
        <taxon>Eukaryota</taxon>
        <taxon>Viridiplantae</taxon>
        <taxon>Streptophyta</taxon>
        <taxon>Embryophyta</taxon>
        <taxon>Tracheophyta</taxon>
        <taxon>Spermatophyta</taxon>
        <taxon>Magnoliopsida</taxon>
        <taxon>eudicotyledons</taxon>
        <taxon>Gunneridae</taxon>
        <taxon>Pentapetalae</taxon>
        <taxon>rosids</taxon>
        <taxon>malvids</taxon>
        <taxon>Brassicales</taxon>
        <taxon>Brassicaceae</taxon>
        <taxon>Camelineae</taxon>
        <taxon>Arabidopsis</taxon>
    </lineage>
</organism>
<proteinExistence type="evidence at protein level"/>